<accession>Q8EM73</accession>
<comment type="function">
    <text evidence="1">Catalyzes the reversible interconversion of serine and glycine with tetrahydrofolate (THF) serving as the one-carbon carrier. This reaction serves as the major source of one-carbon groups required for the biosynthesis of purines, thymidylate, methionine, and other important biomolecules. Also exhibits THF-independent aldolase activity toward beta-hydroxyamino acids, producing glycine and aldehydes, via a retro-aldol mechanism.</text>
</comment>
<comment type="catalytic activity">
    <reaction evidence="1">
        <text>(6R)-5,10-methylene-5,6,7,8-tetrahydrofolate + glycine + H2O = (6S)-5,6,7,8-tetrahydrofolate + L-serine</text>
        <dbReference type="Rhea" id="RHEA:15481"/>
        <dbReference type="ChEBI" id="CHEBI:15377"/>
        <dbReference type="ChEBI" id="CHEBI:15636"/>
        <dbReference type="ChEBI" id="CHEBI:33384"/>
        <dbReference type="ChEBI" id="CHEBI:57305"/>
        <dbReference type="ChEBI" id="CHEBI:57453"/>
        <dbReference type="EC" id="2.1.2.1"/>
    </reaction>
</comment>
<comment type="cofactor">
    <cofactor evidence="1">
        <name>pyridoxal 5'-phosphate</name>
        <dbReference type="ChEBI" id="CHEBI:597326"/>
    </cofactor>
</comment>
<comment type="pathway">
    <text evidence="1">One-carbon metabolism; tetrahydrofolate interconversion.</text>
</comment>
<comment type="pathway">
    <text evidence="1">Amino-acid biosynthesis; glycine biosynthesis; glycine from L-serine: step 1/1.</text>
</comment>
<comment type="subunit">
    <text evidence="1">Homodimer.</text>
</comment>
<comment type="subcellular location">
    <subcellularLocation>
        <location evidence="1">Cytoplasm</location>
    </subcellularLocation>
</comment>
<comment type="similarity">
    <text evidence="1">Belongs to the SHMT family.</text>
</comment>
<sequence>MEFVKQADTEVFEAMQAEKNRQQDKIELIASENFVTKAVMDAMGSILTNKYAEGYPGKRYYGGCEHVDVVENLARDRAKELFGADHANVQPHSGAQANMAVYSAVLEPGDTVLGMNLNHGGHLTHGSPVNFSGQLYNFVDYGVDKETEQLDYDAVLEKAKEVKPKLIVAGASAYSRSINFAKFREIADAVDAYLMVDMAHIAGLVATGEHENPVPHADFVTTTTHKTLRGPRGGMILCKEEFAKKVDKAIFPGIQGGPLMHVIAAKAVSFKEALSDDFKAYSKQIVANAKLLGEALNKEGIRIVSGGTDNHLLLLDVTPLQLTGKVAEKALDDIGITTNKNTIPFDQESPFVTSGIRIGTAAVTTRGFGEEEMKEIASIISLTLKHHEDEAKLKEAAQRVQALTEKFTLYA</sequence>
<gene>
    <name evidence="1" type="primary">glyA</name>
    <name type="ordered locus">OB2985</name>
</gene>
<keyword id="KW-0028">Amino-acid biosynthesis</keyword>
<keyword id="KW-0963">Cytoplasm</keyword>
<keyword id="KW-0554">One-carbon metabolism</keyword>
<keyword id="KW-0663">Pyridoxal phosphate</keyword>
<keyword id="KW-1185">Reference proteome</keyword>
<keyword id="KW-0808">Transferase</keyword>
<proteinExistence type="inferred from homology"/>
<feature type="chain" id="PRO_0000113627" description="Serine hydroxymethyltransferase">
    <location>
        <begin position="1"/>
        <end position="411"/>
    </location>
</feature>
<feature type="binding site" evidence="1">
    <location>
        <position position="117"/>
    </location>
    <ligand>
        <name>(6S)-5,6,7,8-tetrahydrofolate</name>
        <dbReference type="ChEBI" id="CHEBI:57453"/>
    </ligand>
</feature>
<feature type="binding site" evidence="1">
    <location>
        <begin position="121"/>
        <end position="123"/>
    </location>
    <ligand>
        <name>(6S)-5,6,7,8-tetrahydrofolate</name>
        <dbReference type="ChEBI" id="CHEBI:57453"/>
    </ligand>
</feature>
<feature type="binding site" evidence="1">
    <location>
        <position position="241"/>
    </location>
    <ligand>
        <name>(6S)-5,6,7,8-tetrahydrofolate</name>
        <dbReference type="ChEBI" id="CHEBI:57453"/>
    </ligand>
</feature>
<feature type="binding site" evidence="1">
    <location>
        <begin position="349"/>
        <end position="351"/>
    </location>
    <ligand>
        <name>(6S)-5,6,7,8-tetrahydrofolate</name>
        <dbReference type="ChEBI" id="CHEBI:57453"/>
    </ligand>
</feature>
<feature type="site" description="Plays an important role in substrate specificity" evidence="1">
    <location>
        <position position="225"/>
    </location>
</feature>
<feature type="modified residue" description="N6-(pyridoxal phosphate)lysine" evidence="1">
    <location>
        <position position="226"/>
    </location>
</feature>
<name>GLYA_OCEIH</name>
<reference key="1">
    <citation type="journal article" date="2002" name="Nucleic Acids Res.">
        <title>Genome sequence of Oceanobacillus iheyensis isolated from the Iheya Ridge and its unexpected adaptive capabilities to extreme environments.</title>
        <authorList>
            <person name="Takami H."/>
            <person name="Takaki Y."/>
            <person name="Uchiyama I."/>
        </authorList>
    </citation>
    <scope>NUCLEOTIDE SEQUENCE [LARGE SCALE GENOMIC DNA]</scope>
    <source>
        <strain>DSM 14371 / CIP 107618 / JCM 11309 / KCTC 3954 / HTE831</strain>
    </source>
</reference>
<evidence type="ECO:0000255" key="1">
    <source>
        <dbReference type="HAMAP-Rule" id="MF_00051"/>
    </source>
</evidence>
<organism>
    <name type="scientific">Oceanobacillus iheyensis (strain DSM 14371 / CIP 107618 / JCM 11309 / KCTC 3954 / HTE831)</name>
    <dbReference type="NCBI Taxonomy" id="221109"/>
    <lineage>
        <taxon>Bacteria</taxon>
        <taxon>Bacillati</taxon>
        <taxon>Bacillota</taxon>
        <taxon>Bacilli</taxon>
        <taxon>Bacillales</taxon>
        <taxon>Bacillaceae</taxon>
        <taxon>Oceanobacillus</taxon>
    </lineage>
</organism>
<protein>
    <recommendedName>
        <fullName evidence="1">Serine hydroxymethyltransferase</fullName>
        <shortName evidence="1">SHMT</shortName>
        <shortName evidence="1">Serine methylase</shortName>
        <ecNumber evidence="1">2.1.2.1</ecNumber>
    </recommendedName>
</protein>
<dbReference type="EC" id="2.1.2.1" evidence="1"/>
<dbReference type="EMBL" id="BA000028">
    <property type="protein sequence ID" value="BAC14941.1"/>
    <property type="molecule type" value="Genomic_DNA"/>
</dbReference>
<dbReference type="RefSeq" id="WP_011067382.1">
    <property type="nucleotide sequence ID" value="NC_004193.1"/>
</dbReference>
<dbReference type="SMR" id="Q8EM73"/>
<dbReference type="STRING" id="221109.gene:10735237"/>
<dbReference type="KEGG" id="oih:OB2985"/>
<dbReference type="eggNOG" id="COG0112">
    <property type="taxonomic scope" value="Bacteria"/>
</dbReference>
<dbReference type="HOGENOM" id="CLU_022477_2_1_9"/>
<dbReference type="OrthoDB" id="9803846at2"/>
<dbReference type="PhylomeDB" id="Q8EM73"/>
<dbReference type="UniPathway" id="UPA00193"/>
<dbReference type="UniPathway" id="UPA00288">
    <property type="reaction ID" value="UER01023"/>
</dbReference>
<dbReference type="Proteomes" id="UP000000822">
    <property type="component" value="Chromosome"/>
</dbReference>
<dbReference type="GO" id="GO:0005829">
    <property type="term" value="C:cytosol"/>
    <property type="evidence" value="ECO:0007669"/>
    <property type="project" value="TreeGrafter"/>
</dbReference>
<dbReference type="GO" id="GO:0004372">
    <property type="term" value="F:glycine hydroxymethyltransferase activity"/>
    <property type="evidence" value="ECO:0007669"/>
    <property type="project" value="UniProtKB-UniRule"/>
</dbReference>
<dbReference type="GO" id="GO:0030170">
    <property type="term" value="F:pyridoxal phosphate binding"/>
    <property type="evidence" value="ECO:0007669"/>
    <property type="project" value="UniProtKB-UniRule"/>
</dbReference>
<dbReference type="GO" id="GO:0019264">
    <property type="term" value="P:glycine biosynthetic process from serine"/>
    <property type="evidence" value="ECO:0007669"/>
    <property type="project" value="UniProtKB-UniRule"/>
</dbReference>
<dbReference type="GO" id="GO:0035999">
    <property type="term" value="P:tetrahydrofolate interconversion"/>
    <property type="evidence" value="ECO:0007669"/>
    <property type="project" value="UniProtKB-UniRule"/>
</dbReference>
<dbReference type="CDD" id="cd00378">
    <property type="entry name" value="SHMT"/>
    <property type="match status" value="1"/>
</dbReference>
<dbReference type="FunFam" id="3.40.640.10:FF:000001">
    <property type="entry name" value="Serine hydroxymethyltransferase"/>
    <property type="match status" value="1"/>
</dbReference>
<dbReference type="FunFam" id="3.90.1150.10:FF:000003">
    <property type="entry name" value="Serine hydroxymethyltransferase"/>
    <property type="match status" value="1"/>
</dbReference>
<dbReference type="Gene3D" id="3.90.1150.10">
    <property type="entry name" value="Aspartate Aminotransferase, domain 1"/>
    <property type="match status" value="1"/>
</dbReference>
<dbReference type="Gene3D" id="3.40.640.10">
    <property type="entry name" value="Type I PLP-dependent aspartate aminotransferase-like (Major domain)"/>
    <property type="match status" value="1"/>
</dbReference>
<dbReference type="HAMAP" id="MF_00051">
    <property type="entry name" value="SHMT"/>
    <property type="match status" value="1"/>
</dbReference>
<dbReference type="InterPro" id="IPR015424">
    <property type="entry name" value="PyrdxlP-dep_Trfase"/>
</dbReference>
<dbReference type="InterPro" id="IPR015421">
    <property type="entry name" value="PyrdxlP-dep_Trfase_major"/>
</dbReference>
<dbReference type="InterPro" id="IPR015422">
    <property type="entry name" value="PyrdxlP-dep_Trfase_small"/>
</dbReference>
<dbReference type="InterPro" id="IPR001085">
    <property type="entry name" value="Ser_HO-MeTrfase"/>
</dbReference>
<dbReference type="InterPro" id="IPR049943">
    <property type="entry name" value="Ser_HO-MeTrfase-like"/>
</dbReference>
<dbReference type="InterPro" id="IPR019798">
    <property type="entry name" value="Ser_HO-MeTrfase_PLP_BS"/>
</dbReference>
<dbReference type="InterPro" id="IPR039429">
    <property type="entry name" value="SHMT-like_dom"/>
</dbReference>
<dbReference type="NCBIfam" id="NF000586">
    <property type="entry name" value="PRK00011.1"/>
    <property type="match status" value="1"/>
</dbReference>
<dbReference type="PANTHER" id="PTHR11680">
    <property type="entry name" value="SERINE HYDROXYMETHYLTRANSFERASE"/>
    <property type="match status" value="1"/>
</dbReference>
<dbReference type="PANTHER" id="PTHR11680:SF35">
    <property type="entry name" value="SERINE HYDROXYMETHYLTRANSFERASE 1"/>
    <property type="match status" value="1"/>
</dbReference>
<dbReference type="Pfam" id="PF00464">
    <property type="entry name" value="SHMT"/>
    <property type="match status" value="1"/>
</dbReference>
<dbReference type="PIRSF" id="PIRSF000412">
    <property type="entry name" value="SHMT"/>
    <property type="match status" value="1"/>
</dbReference>
<dbReference type="SUPFAM" id="SSF53383">
    <property type="entry name" value="PLP-dependent transferases"/>
    <property type="match status" value="1"/>
</dbReference>
<dbReference type="PROSITE" id="PS00096">
    <property type="entry name" value="SHMT"/>
    <property type="match status" value="1"/>
</dbReference>